<proteinExistence type="inferred from homology"/>
<evidence type="ECO:0000255" key="1">
    <source>
        <dbReference type="HAMAP-Rule" id="MF_00386"/>
    </source>
</evidence>
<comment type="function">
    <text evidence="1">Could be involved in insertion of integral membrane proteins into the membrane.</text>
</comment>
<comment type="subcellular location">
    <subcellularLocation>
        <location evidence="1">Cell inner membrane</location>
        <topology evidence="1">Peripheral membrane protein</topology>
        <orientation evidence="1">Cytoplasmic side</orientation>
    </subcellularLocation>
</comment>
<comment type="similarity">
    <text evidence="1">Belongs to the UPF0161 family.</text>
</comment>
<organism>
    <name type="scientific">Paraburkholderia phytofirmans (strain DSM 17436 / LMG 22146 / PsJN)</name>
    <name type="common">Burkholderia phytofirmans</name>
    <dbReference type="NCBI Taxonomy" id="398527"/>
    <lineage>
        <taxon>Bacteria</taxon>
        <taxon>Pseudomonadati</taxon>
        <taxon>Pseudomonadota</taxon>
        <taxon>Betaproteobacteria</taxon>
        <taxon>Burkholderiales</taxon>
        <taxon>Burkholderiaceae</taxon>
        <taxon>Paraburkholderia</taxon>
    </lineage>
</organism>
<name>YIDD_PARPJ</name>
<gene>
    <name type="ordered locus">Bphyt_3987</name>
</gene>
<protein>
    <recommendedName>
        <fullName evidence="1">Putative membrane protein insertion efficiency factor</fullName>
    </recommendedName>
</protein>
<accession>B2T7U2</accession>
<reference key="1">
    <citation type="journal article" date="2011" name="J. Bacteriol.">
        <title>Complete genome sequence of the plant growth-promoting endophyte Burkholderia phytofirmans strain PsJN.</title>
        <authorList>
            <person name="Weilharter A."/>
            <person name="Mitter B."/>
            <person name="Shin M.V."/>
            <person name="Chain P.S."/>
            <person name="Nowak J."/>
            <person name="Sessitsch A."/>
        </authorList>
    </citation>
    <scope>NUCLEOTIDE SEQUENCE [LARGE SCALE GENOMIC DNA]</scope>
    <source>
        <strain>DSM 17436 / LMG 22146 / PsJN</strain>
    </source>
</reference>
<dbReference type="EMBL" id="CP001052">
    <property type="protein sequence ID" value="ACD18373.1"/>
    <property type="molecule type" value="Genomic_DNA"/>
</dbReference>
<dbReference type="STRING" id="398527.Bphyt_3987"/>
<dbReference type="KEGG" id="bpy:Bphyt_3987"/>
<dbReference type="eggNOG" id="COG0759">
    <property type="taxonomic scope" value="Bacteria"/>
</dbReference>
<dbReference type="HOGENOM" id="CLU_144811_5_2_4"/>
<dbReference type="OrthoDB" id="9801753at2"/>
<dbReference type="Proteomes" id="UP000001739">
    <property type="component" value="Chromosome 1"/>
</dbReference>
<dbReference type="GO" id="GO:0005886">
    <property type="term" value="C:plasma membrane"/>
    <property type="evidence" value="ECO:0007669"/>
    <property type="project" value="UniProtKB-SubCell"/>
</dbReference>
<dbReference type="HAMAP" id="MF_00386">
    <property type="entry name" value="UPF0161_YidD"/>
    <property type="match status" value="1"/>
</dbReference>
<dbReference type="InterPro" id="IPR002696">
    <property type="entry name" value="Membr_insert_effic_factor_YidD"/>
</dbReference>
<dbReference type="NCBIfam" id="TIGR00278">
    <property type="entry name" value="membrane protein insertion efficiency factor YidD"/>
    <property type="match status" value="1"/>
</dbReference>
<dbReference type="PANTHER" id="PTHR33383">
    <property type="entry name" value="MEMBRANE PROTEIN INSERTION EFFICIENCY FACTOR-RELATED"/>
    <property type="match status" value="1"/>
</dbReference>
<dbReference type="PANTHER" id="PTHR33383:SF1">
    <property type="entry name" value="MEMBRANE PROTEIN INSERTION EFFICIENCY FACTOR-RELATED"/>
    <property type="match status" value="1"/>
</dbReference>
<dbReference type="Pfam" id="PF01809">
    <property type="entry name" value="YidD"/>
    <property type="match status" value="1"/>
</dbReference>
<dbReference type="SMART" id="SM01234">
    <property type="entry name" value="Haemolytic"/>
    <property type="match status" value="1"/>
</dbReference>
<sequence>MQTVLIALLRFYKVAVSPMLGNRCRFYPSCSDYAREAIQYHGAARGTYLAARRICRCHPFSAGGIDLVPPPTSEKR</sequence>
<feature type="chain" id="PRO_1000122624" description="Putative membrane protein insertion efficiency factor">
    <location>
        <begin position="1"/>
        <end position="76"/>
    </location>
</feature>
<keyword id="KW-0997">Cell inner membrane</keyword>
<keyword id="KW-1003">Cell membrane</keyword>
<keyword id="KW-0472">Membrane</keyword>